<proteinExistence type="inferred from homology"/>
<sequence length="418" mass="46133">MTLLALGINHKTAPVSLRERVTFSPDTLDQALDSLLAQPMVQGGVVLSTCNRTELYLSVEEQDNLQEALIRWLCDYHNLNEDDLRNSLYWHQDNDAVSHLMRVASGLDSLVLGEPQILGQVKKAFADSQKGHLNASALERMFQKSFSVAKRVRTETDIGASAVSVAFAACTLARQIFESLSTVTVLLVGAGETIELVARHLREHKVQKMIIANRTRERAQALADEVGAEVISLSDIDARLQDADIIISSTASPLPIIGKGMVERALKSRRNQPMLLVDIAVPRDVEPEVGKLANAYLYSVDDLQSIISHNLVQRQAAAVEAETIVEQEASEFMAWLRAQGASETIREYRSQSEQIRDELTTKALSALQQGGDAQAILQDLAWKLTNRLIHAPTKSLQQAARDGDDERLNILRDSLGLE</sequence>
<dbReference type="EC" id="1.2.1.70" evidence="1"/>
<dbReference type="EMBL" id="AE017220">
    <property type="protein sequence ID" value="AAX65677.1"/>
    <property type="molecule type" value="Genomic_DNA"/>
</dbReference>
<dbReference type="RefSeq" id="WP_001540179.1">
    <property type="nucleotide sequence ID" value="NC_006905.1"/>
</dbReference>
<dbReference type="SMR" id="Q57NN4"/>
<dbReference type="KEGG" id="sec:SCH_1771"/>
<dbReference type="HOGENOM" id="CLU_035113_2_2_6"/>
<dbReference type="UniPathway" id="UPA00251">
    <property type="reaction ID" value="UER00316"/>
</dbReference>
<dbReference type="Proteomes" id="UP000000538">
    <property type="component" value="Chromosome"/>
</dbReference>
<dbReference type="GO" id="GO:0008883">
    <property type="term" value="F:glutamyl-tRNA reductase activity"/>
    <property type="evidence" value="ECO:0007669"/>
    <property type="project" value="UniProtKB-UniRule"/>
</dbReference>
<dbReference type="GO" id="GO:0050661">
    <property type="term" value="F:NADP binding"/>
    <property type="evidence" value="ECO:0007669"/>
    <property type="project" value="InterPro"/>
</dbReference>
<dbReference type="GO" id="GO:0019353">
    <property type="term" value="P:protoporphyrinogen IX biosynthetic process from glutamate"/>
    <property type="evidence" value="ECO:0007669"/>
    <property type="project" value="TreeGrafter"/>
</dbReference>
<dbReference type="CDD" id="cd05213">
    <property type="entry name" value="NAD_bind_Glutamyl_tRNA_reduct"/>
    <property type="match status" value="1"/>
</dbReference>
<dbReference type="FunFam" id="3.30.460.30:FF:000001">
    <property type="entry name" value="Glutamyl-tRNA reductase"/>
    <property type="match status" value="1"/>
</dbReference>
<dbReference type="FunFam" id="3.40.50.720:FF:000031">
    <property type="entry name" value="Glutamyl-tRNA reductase"/>
    <property type="match status" value="1"/>
</dbReference>
<dbReference type="Gene3D" id="3.30.460.30">
    <property type="entry name" value="Glutamyl-tRNA reductase, N-terminal domain"/>
    <property type="match status" value="1"/>
</dbReference>
<dbReference type="Gene3D" id="3.40.50.720">
    <property type="entry name" value="NAD(P)-binding Rossmann-like Domain"/>
    <property type="match status" value="1"/>
</dbReference>
<dbReference type="HAMAP" id="MF_00087">
    <property type="entry name" value="Glu_tRNA_reductase"/>
    <property type="match status" value="1"/>
</dbReference>
<dbReference type="InterPro" id="IPR000343">
    <property type="entry name" value="4pyrrol_synth_GluRdtase"/>
</dbReference>
<dbReference type="InterPro" id="IPR015896">
    <property type="entry name" value="4pyrrol_synth_GluRdtase_dimer"/>
</dbReference>
<dbReference type="InterPro" id="IPR015895">
    <property type="entry name" value="4pyrrol_synth_GluRdtase_N"/>
</dbReference>
<dbReference type="InterPro" id="IPR018214">
    <property type="entry name" value="GluRdtase_CS"/>
</dbReference>
<dbReference type="InterPro" id="IPR036453">
    <property type="entry name" value="GluRdtase_dimer_dom_sf"/>
</dbReference>
<dbReference type="InterPro" id="IPR036343">
    <property type="entry name" value="GluRdtase_N_sf"/>
</dbReference>
<dbReference type="InterPro" id="IPR036291">
    <property type="entry name" value="NAD(P)-bd_dom_sf"/>
</dbReference>
<dbReference type="InterPro" id="IPR006151">
    <property type="entry name" value="Shikm_DH/Glu-tRNA_Rdtase"/>
</dbReference>
<dbReference type="NCBIfam" id="TIGR01035">
    <property type="entry name" value="hemA"/>
    <property type="match status" value="1"/>
</dbReference>
<dbReference type="PANTHER" id="PTHR43013">
    <property type="entry name" value="GLUTAMYL-TRNA REDUCTASE"/>
    <property type="match status" value="1"/>
</dbReference>
<dbReference type="PANTHER" id="PTHR43013:SF1">
    <property type="entry name" value="GLUTAMYL-TRNA REDUCTASE"/>
    <property type="match status" value="1"/>
</dbReference>
<dbReference type="Pfam" id="PF00745">
    <property type="entry name" value="GlutR_dimer"/>
    <property type="match status" value="1"/>
</dbReference>
<dbReference type="Pfam" id="PF05201">
    <property type="entry name" value="GlutR_N"/>
    <property type="match status" value="1"/>
</dbReference>
<dbReference type="Pfam" id="PF01488">
    <property type="entry name" value="Shikimate_DH"/>
    <property type="match status" value="1"/>
</dbReference>
<dbReference type="PIRSF" id="PIRSF000445">
    <property type="entry name" value="4pyrrol_synth_GluRdtase"/>
    <property type="match status" value="1"/>
</dbReference>
<dbReference type="SUPFAM" id="SSF69742">
    <property type="entry name" value="Glutamyl tRNA-reductase catalytic, N-terminal domain"/>
    <property type="match status" value="1"/>
</dbReference>
<dbReference type="SUPFAM" id="SSF69075">
    <property type="entry name" value="Glutamyl tRNA-reductase dimerization domain"/>
    <property type="match status" value="1"/>
</dbReference>
<dbReference type="SUPFAM" id="SSF51735">
    <property type="entry name" value="NAD(P)-binding Rossmann-fold domains"/>
    <property type="match status" value="1"/>
</dbReference>
<dbReference type="PROSITE" id="PS00747">
    <property type="entry name" value="GLUTR"/>
    <property type="match status" value="1"/>
</dbReference>
<reference key="1">
    <citation type="journal article" date="2005" name="Nucleic Acids Res.">
        <title>The genome sequence of Salmonella enterica serovar Choleraesuis, a highly invasive and resistant zoonotic pathogen.</title>
        <authorList>
            <person name="Chiu C.-H."/>
            <person name="Tang P."/>
            <person name="Chu C."/>
            <person name="Hu S."/>
            <person name="Bao Q."/>
            <person name="Yu J."/>
            <person name="Chou Y.-Y."/>
            <person name="Wang H.-S."/>
            <person name="Lee Y.-S."/>
        </authorList>
    </citation>
    <scope>NUCLEOTIDE SEQUENCE [LARGE SCALE GENOMIC DNA]</scope>
    <source>
        <strain>SC-B67</strain>
    </source>
</reference>
<gene>
    <name evidence="1" type="primary">hemA</name>
    <name type="ordered locus">SCH_1771</name>
</gene>
<comment type="function">
    <text evidence="1">Catalyzes the NADPH-dependent reduction of glutamyl-tRNA(Glu) to glutamate 1-semialdehyde (GSA).</text>
</comment>
<comment type="catalytic activity">
    <reaction evidence="1">
        <text>(S)-4-amino-5-oxopentanoate + tRNA(Glu) + NADP(+) = L-glutamyl-tRNA(Glu) + NADPH + H(+)</text>
        <dbReference type="Rhea" id="RHEA:12344"/>
        <dbReference type="Rhea" id="RHEA-COMP:9663"/>
        <dbReference type="Rhea" id="RHEA-COMP:9680"/>
        <dbReference type="ChEBI" id="CHEBI:15378"/>
        <dbReference type="ChEBI" id="CHEBI:57501"/>
        <dbReference type="ChEBI" id="CHEBI:57783"/>
        <dbReference type="ChEBI" id="CHEBI:58349"/>
        <dbReference type="ChEBI" id="CHEBI:78442"/>
        <dbReference type="ChEBI" id="CHEBI:78520"/>
        <dbReference type="EC" id="1.2.1.70"/>
    </reaction>
</comment>
<comment type="pathway">
    <text evidence="1">Porphyrin-containing compound metabolism; protoporphyrin-IX biosynthesis; 5-aminolevulinate from L-glutamyl-tRNA(Glu): step 1/2.</text>
</comment>
<comment type="subunit">
    <text evidence="1">Homodimer.</text>
</comment>
<comment type="domain">
    <text evidence="1">Possesses an unusual extended V-shaped dimeric structure with each monomer consisting of three distinct domains arranged along a curved 'spinal' alpha-helix. The N-terminal catalytic domain specifically recognizes the glutamate moiety of the substrate. The second domain is the NADPH-binding domain, and the third C-terminal domain is responsible for dimerization.</text>
</comment>
<comment type="miscellaneous">
    <text evidence="1">During catalysis, the active site Cys acts as a nucleophile attacking the alpha-carbonyl group of tRNA-bound glutamate with the formation of a thioester intermediate between enzyme and glutamate, and the concomitant release of tRNA(Glu). The thioester intermediate is finally reduced by direct hydride transfer from NADPH, to form the product GSA.</text>
</comment>
<comment type="similarity">
    <text evidence="1">Belongs to the glutamyl-tRNA reductase family.</text>
</comment>
<accession>Q57NN4</accession>
<feature type="chain" id="PRO_1000004683" description="Glutamyl-tRNA reductase">
    <location>
        <begin position="1"/>
        <end position="418"/>
    </location>
</feature>
<feature type="active site" description="Nucleophile" evidence="1">
    <location>
        <position position="50"/>
    </location>
</feature>
<feature type="binding site" evidence="1">
    <location>
        <begin position="49"/>
        <end position="52"/>
    </location>
    <ligand>
        <name>substrate</name>
    </ligand>
</feature>
<feature type="binding site" evidence="1">
    <location>
        <position position="109"/>
    </location>
    <ligand>
        <name>substrate</name>
    </ligand>
</feature>
<feature type="binding site" evidence="1">
    <location>
        <begin position="114"/>
        <end position="116"/>
    </location>
    <ligand>
        <name>substrate</name>
    </ligand>
</feature>
<feature type="binding site" evidence="1">
    <location>
        <position position="120"/>
    </location>
    <ligand>
        <name>substrate</name>
    </ligand>
</feature>
<feature type="binding site" evidence="1">
    <location>
        <begin position="189"/>
        <end position="194"/>
    </location>
    <ligand>
        <name>NADP(+)</name>
        <dbReference type="ChEBI" id="CHEBI:58349"/>
    </ligand>
</feature>
<feature type="site" description="Important for activity" evidence="1">
    <location>
        <position position="99"/>
    </location>
</feature>
<evidence type="ECO:0000255" key="1">
    <source>
        <dbReference type="HAMAP-Rule" id="MF_00087"/>
    </source>
</evidence>
<keyword id="KW-0521">NADP</keyword>
<keyword id="KW-0560">Oxidoreductase</keyword>
<keyword id="KW-0627">Porphyrin biosynthesis</keyword>
<name>HEM1_SALCH</name>
<protein>
    <recommendedName>
        <fullName evidence="1">Glutamyl-tRNA reductase</fullName>
        <shortName evidence="1">GluTR</shortName>
        <ecNumber evidence="1">1.2.1.70</ecNumber>
    </recommendedName>
</protein>
<organism>
    <name type="scientific">Salmonella choleraesuis (strain SC-B67)</name>
    <dbReference type="NCBI Taxonomy" id="321314"/>
    <lineage>
        <taxon>Bacteria</taxon>
        <taxon>Pseudomonadati</taxon>
        <taxon>Pseudomonadota</taxon>
        <taxon>Gammaproteobacteria</taxon>
        <taxon>Enterobacterales</taxon>
        <taxon>Enterobacteriaceae</taxon>
        <taxon>Salmonella</taxon>
    </lineage>
</organism>